<dbReference type="EMBL" id="AF003605">
    <property type="protein sequence ID" value="AAC05333.1"/>
    <property type="molecule type" value="Genomic_DNA"/>
</dbReference>
<dbReference type="SMR" id="O16023"/>
<dbReference type="STRING" id="7370.O16023"/>
<dbReference type="VEuPathDB" id="VectorBase:MDOA004331"/>
<dbReference type="VEuPathDB" id="VectorBase:MDOMA2_019567"/>
<dbReference type="eggNOG" id="KOG1034">
    <property type="taxonomic scope" value="Eukaryota"/>
</dbReference>
<dbReference type="OrthoDB" id="7318948at2759"/>
<dbReference type="Proteomes" id="UP000694905">
    <property type="component" value="Unplaced"/>
</dbReference>
<dbReference type="GO" id="GO:0005634">
    <property type="term" value="C:nucleus"/>
    <property type="evidence" value="ECO:0007669"/>
    <property type="project" value="UniProtKB-SubCell"/>
</dbReference>
<dbReference type="FunFam" id="2.130.10.10:FF:000056">
    <property type="entry name" value="Polycomb protein eed"/>
    <property type="match status" value="1"/>
</dbReference>
<dbReference type="Gene3D" id="2.130.10.10">
    <property type="entry name" value="YVTN repeat-like/Quinoprotein amine dehydrogenase"/>
    <property type="match status" value="1"/>
</dbReference>
<dbReference type="InterPro" id="IPR051243">
    <property type="entry name" value="PcG_WD-repeat"/>
</dbReference>
<dbReference type="InterPro" id="IPR015943">
    <property type="entry name" value="WD40/YVTN_repeat-like_dom_sf"/>
</dbReference>
<dbReference type="InterPro" id="IPR019775">
    <property type="entry name" value="WD40_repeat_CS"/>
</dbReference>
<dbReference type="InterPro" id="IPR036322">
    <property type="entry name" value="WD40_repeat_dom_sf"/>
</dbReference>
<dbReference type="InterPro" id="IPR001680">
    <property type="entry name" value="WD40_rpt"/>
</dbReference>
<dbReference type="PANTHER" id="PTHR10253">
    <property type="entry name" value="POLYCOMB PROTEIN"/>
    <property type="match status" value="1"/>
</dbReference>
<dbReference type="Pfam" id="PF00400">
    <property type="entry name" value="WD40"/>
    <property type="match status" value="2"/>
</dbReference>
<dbReference type="SMART" id="SM00320">
    <property type="entry name" value="WD40"/>
    <property type="match status" value="6"/>
</dbReference>
<dbReference type="SUPFAM" id="SSF50978">
    <property type="entry name" value="WD40 repeat-like"/>
    <property type="match status" value="1"/>
</dbReference>
<dbReference type="PROSITE" id="PS00678">
    <property type="entry name" value="WD_REPEATS_1"/>
    <property type="match status" value="1"/>
</dbReference>
<dbReference type="PROSITE" id="PS50082">
    <property type="entry name" value="WD_REPEATS_2"/>
    <property type="match status" value="2"/>
</dbReference>
<dbReference type="PROSITE" id="PS50294">
    <property type="entry name" value="WD_REPEATS_REGION"/>
    <property type="match status" value="1"/>
</dbReference>
<protein>
    <recommendedName>
        <fullName>Polycomb protein esc</fullName>
    </recommendedName>
    <alternativeName>
        <fullName>Protein extra sex combs</fullName>
    </alternativeName>
</protein>
<accession>O16023</accession>
<sequence>MSKVKADKQSPKENTKAENSDNESIDDTASVATSTTSRSKSPGSRGRRQSRGHSKSKAKRPAYKYDCHLKEDHGQAIFGVSFNHLLGKDQSMVFATAGSNRCNIYECPRKGGLKLIMCYADPDPDEVFYTCSWSYDLKTSAPLLATAGYRGVIRVIDIHRNESVGNYVGHGQAINELKFHPRQANLLLSGSKDHAIRLWNIQTHVCIAIFGGVEGHRDEVLSIDFDLRGERIMSSGMDHSLKLWRIDTPEFKDKIEMSRTFNPNKSQLPFPTIMQHFPEFSTRDIHRNYVDCVQWFGDFVLSKSCENSIVCWKPGQLHQTLSQLKPNDPSCTIISEFNYDECEIWFVRFGFNPWHKIVALGNQYGKVYVWELDPSDPRHTHSSTLNNIRCTSIVRQTAFSRDATVLVWVCDDGTVWRWNRRNAEVHTP</sequence>
<keyword id="KW-0217">Developmental protein</keyword>
<keyword id="KW-0539">Nucleus</keyword>
<keyword id="KW-0597">Phosphoprotein</keyword>
<keyword id="KW-1185">Reference proteome</keyword>
<keyword id="KW-0677">Repeat</keyword>
<keyword id="KW-0678">Repressor</keyword>
<keyword id="KW-0804">Transcription</keyword>
<keyword id="KW-0805">Transcription regulation</keyword>
<keyword id="KW-0853">WD repeat</keyword>
<evidence type="ECO:0000250" key="1"/>
<evidence type="ECO:0000256" key="2">
    <source>
        <dbReference type="SAM" id="MobiDB-lite"/>
    </source>
</evidence>
<evidence type="ECO:0000305" key="3"/>
<gene>
    <name type="primary">esc</name>
</gene>
<name>ESC_MUSDO</name>
<organism>
    <name type="scientific">Musca domestica</name>
    <name type="common">House fly</name>
    <dbReference type="NCBI Taxonomy" id="7370"/>
    <lineage>
        <taxon>Eukaryota</taxon>
        <taxon>Metazoa</taxon>
        <taxon>Ecdysozoa</taxon>
        <taxon>Arthropoda</taxon>
        <taxon>Hexapoda</taxon>
        <taxon>Insecta</taxon>
        <taxon>Pterygota</taxon>
        <taxon>Neoptera</taxon>
        <taxon>Endopterygota</taxon>
        <taxon>Diptera</taxon>
        <taxon>Brachycera</taxon>
        <taxon>Muscomorpha</taxon>
        <taxon>Muscoidea</taxon>
        <taxon>Muscidae</taxon>
        <taxon>Musca</taxon>
    </lineage>
</organism>
<reference key="1">
    <citation type="journal article" date="1997" name="Mol. Cell. Biol.">
        <title>Evolutionary conservation and predicted structure of the Drosophila extra sex combs repressor protein.</title>
        <authorList>
            <person name="Ng J."/>
            <person name="Li R."/>
            <person name="Morgan K."/>
            <person name="Simon J.A."/>
        </authorList>
    </citation>
    <scope>NUCLEOTIDE SEQUENCE [GENOMIC DNA]</scope>
</reference>
<feature type="chain" id="PRO_0000050974" description="Polycomb protein esc">
    <location>
        <begin position="1"/>
        <end position="428"/>
    </location>
</feature>
<feature type="repeat" description="WD 1">
    <location>
        <begin position="72"/>
        <end position="115"/>
    </location>
</feature>
<feature type="repeat" description="WD 2">
    <location>
        <begin position="124"/>
        <end position="166"/>
    </location>
</feature>
<feature type="repeat" description="WD 3">
    <location>
        <begin position="169"/>
        <end position="209"/>
    </location>
</feature>
<feature type="repeat" description="WD 4">
    <location>
        <begin position="215"/>
        <end position="254"/>
    </location>
</feature>
<feature type="repeat" description="WD 5">
    <location>
        <begin position="285"/>
        <end position="322"/>
    </location>
</feature>
<feature type="repeat" description="WD 6">
    <location>
        <begin position="341"/>
        <end position="380"/>
    </location>
</feature>
<feature type="repeat" description="WD 7">
    <location>
        <begin position="389"/>
        <end position="427"/>
    </location>
</feature>
<feature type="region of interest" description="Disordered" evidence="2">
    <location>
        <begin position="1"/>
        <end position="61"/>
    </location>
</feature>
<feature type="compositionally biased region" description="Basic and acidic residues" evidence="2">
    <location>
        <begin position="1"/>
        <end position="19"/>
    </location>
</feature>
<feature type="compositionally biased region" description="Low complexity" evidence="2">
    <location>
        <begin position="27"/>
        <end position="44"/>
    </location>
</feature>
<feature type="compositionally biased region" description="Basic residues" evidence="2">
    <location>
        <begin position="45"/>
        <end position="61"/>
    </location>
</feature>
<proteinExistence type="inferred from homology"/>
<comment type="function">
    <text evidence="1">Polycomb group (PcG) protein. In contrast to other PcG protein, it is specifically required during the first 6 hours of embryogenesis to establish PcG silencing. PcG proteins act by forming multiprotein complexes, which are required to maintain the transcriptionally repressive state of homeotic genes throughout development. PcG proteins are not required to initiate repression, but to maintain it during later stages of development. They probably act via a methylation of histones, rendering chromatin heritably changed in its expressibility. Component of the Esc/E(z) complex, which methylates 'Lys-9' and 'Lys-27' residues of histone H3. The Esc/E(z) complex is necessary but not sufficient to recruit a functional PcG repressive complex that represses target genes, suggesting that the recruitment of the distinct PRC1 complex is also required to allow a subsequent repression (By similarity).</text>
</comment>
<comment type="subunit">
    <text evidence="1">Component of the Esc/E(z) complex, composed of Esc, E(z), Su(z)12, Rpd3, Caf1 and probably Pho. This complex is distinct from the PRC1 complex, which contains many other PcG proteins like Pc, Ph, Psc, Su(z)2. The two complexes however cooperate and interact together during the first 3 hours of development to establish PcG silencing (By similarity).</text>
</comment>
<comment type="subcellular location">
    <subcellularLocation>
        <location evidence="3">Nucleus</location>
    </subcellularLocation>
</comment>
<comment type="PTM">
    <text evidence="1">Phosphorylated.</text>
</comment>
<comment type="similarity">
    <text evidence="3">Belongs to the WD repeat ESC family.</text>
</comment>